<accession>B2UXS3</accession>
<protein>
    <recommendedName>
        <fullName evidence="1">UDP-N-acetylmuramate--L-alanine ligase</fullName>
        <ecNumber evidence="1">6.3.2.8</ecNumber>
    </recommendedName>
    <alternativeName>
        <fullName evidence="1">UDP-N-acetylmuramoyl-L-alanine synthetase</fullName>
    </alternativeName>
</protein>
<sequence>MSFDFIKDRDKKVHFIGIGGISMSGLAAVLLNSGYKVSGSDFKESEILKKLRLSGADIYIGHSEKNIKDVDLVVYTAAIPENNPELIYAKENNIDLMNRAEFLGNIMKGHKYNVAISGAHGKTTCTSMLSNITLKANLDPTILVGGELDIIGGNFRIGSSDYFITEACEYKRSFLSFFPYVGVILNIDADHLDYYKDIDEITETFGQFADLIPNDGYLIGYIGDSRVKEILSKAKCNTLSYGFENADVTARNITFNEKGCASFDVYKHNDKLFDLTLSNPGEHNILNALSSICVSLIFDVNYDDIICGLSECKGAHKRFEYKGEVNGVTVIDDYAHHPVEIKATLNTSKKIPHNKTFCVFQPHTYTRTKTLFDEFTDAFFDADEVVLMDIYAAREKDTGLVSSNDLGVALRAKGVKCTNVHSHDEALEYLKNSAKPNDLLLTVGAGDVVIVGEKYLNQGK</sequence>
<keyword id="KW-0067">ATP-binding</keyword>
<keyword id="KW-0131">Cell cycle</keyword>
<keyword id="KW-0132">Cell division</keyword>
<keyword id="KW-0133">Cell shape</keyword>
<keyword id="KW-0961">Cell wall biogenesis/degradation</keyword>
<keyword id="KW-0963">Cytoplasm</keyword>
<keyword id="KW-0436">Ligase</keyword>
<keyword id="KW-0547">Nucleotide-binding</keyword>
<keyword id="KW-0573">Peptidoglycan synthesis</keyword>
<reference key="1">
    <citation type="submission" date="2008-05" db="EMBL/GenBank/DDBJ databases">
        <title>Complete genome sequence of Clostridium botulinum E3 str. Alaska E43.</title>
        <authorList>
            <person name="Brinkac L.M."/>
            <person name="Brown J.L."/>
            <person name="Bruce D."/>
            <person name="Detter C."/>
            <person name="Munk C."/>
            <person name="Smith L.A."/>
            <person name="Smith T.J."/>
            <person name="Sutton G."/>
            <person name="Brettin T.S."/>
        </authorList>
    </citation>
    <scope>NUCLEOTIDE SEQUENCE [LARGE SCALE GENOMIC DNA]</scope>
    <source>
        <strain>Alaska E43 / Type E3</strain>
    </source>
</reference>
<comment type="function">
    <text evidence="1">Cell wall formation.</text>
</comment>
<comment type="catalytic activity">
    <reaction evidence="1">
        <text>UDP-N-acetyl-alpha-D-muramate + L-alanine + ATP = UDP-N-acetyl-alpha-D-muramoyl-L-alanine + ADP + phosphate + H(+)</text>
        <dbReference type="Rhea" id="RHEA:23372"/>
        <dbReference type="ChEBI" id="CHEBI:15378"/>
        <dbReference type="ChEBI" id="CHEBI:30616"/>
        <dbReference type="ChEBI" id="CHEBI:43474"/>
        <dbReference type="ChEBI" id="CHEBI:57972"/>
        <dbReference type="ChEBI" id="CHEBI:70757"/>
        <dbReference type="ChEBI" id="CHEBI:83898"/>
        <dbReference type="ChEBI" id="CHEBI:456216"/>
        <dbReference type="EC" id="6.3.2.8"/>
    </reaction>
</comment>
<comment type="pathway">
    <text evidence="1">Cell wall biogenesis; peptidoglycan biosynthesis.</text>
</comment>
<comment type="subcellular location">
    <subcellularLocation>
        <location evidence="1">Cytoplasm</location>
    </subcellularLocation>
</comment>
<comment type="similarity">
    <text evidence="1">Belongs to the MurCDEF family.</text>
</comment>
<organism>
    <name type="scientific">Clostridium botulinum (strain Alaska E43 / Type E3)</name>
    <dbReference type="NCBI Taxonomy" id="508767"/>
    <lineage>
        <taxon>Bacteria</taxon>
        <taxon>Bacillati</taxon>
        <taxon>Bacillota</taxon>
        <taxon>Clostridia</taxon>
        <taxon>Eubacteriales</taxon>
        <taxon>Clostridiaceae</taxon>
        <taxon>Clostridium</taxon>
    </lineage>
</organism>
<feature type="chain" id="PRO_1000091089" description="UDP-N-acetylmuramate--L-alanine ligase">
    <location>
        <begin position="1"/>
        <end position="460"/>
    </location>
</feature>
<feature type="binding site" evidence="1">
    <location>
        <begin position="118"/>
        <end position="124"/>
    </location>
    <ligand>
        <name>ATP</name>
        <dbReference type="ChEBI" id="CHEBI:30616"/>
    </ligand>
</feature>
<name>MURC_CLOBA</name>
<gene>
    <name evidence="1" type="primary">murC</name>
    <name type="ordered locus">CLH_0137</name>
</gene>
<evidence type="ECO:0000255" key="1">
    <source>
        <dbReference type="HAMAP-Rule" id="MF_00046"/>
    </source>
</evidence>
<proteinExistence type="inferred from homology"/>
<dbReference type="EC" id="6.3.2.8" evidence="1"/>
<dbReference type="EMBL" id="CP001078">
    <property type="protein sequence ID" value="ACD52766.1"/>
    <property type="molecule type" value="Genomic_DNA"/>
</dbReference>
<dbReference type="RefSeq" id="WP_012450837.1">
    <property type="nucleotide sequence ID" value="NC_010723.1"/>
</dbReference>
<dbReference type="SMR" id="B2UXS3"/>
<dbReference type="KEGG" id="cbt:CLH_0137"/>
<dbReference type="HOGENOM" id="CLU_028104_1_0_9"/>
<dbReference type="UniPathway" id="UPA00219"/>
<dbReference type="GO" id="GO:0005737">
    <property type="term" value="C:cytoplasm"/>
    <property type="evidence" value="ECO:0007669"/>
    <property type="project" value="UniProtKB-SubCell"/>
</dbReference>
<dbReference type="GO" id="GO:0005524">
    <property type="term" value="F:ATP binding"/>
    <property type="evidence" value="ECO:0007669"/>
    <property type="project" value="UniProtKB-UniRule"/>
</dbReference>
<dbReference type="GO" id="GO:0008763">
    <property type="term" value="F:UDP-N-acetylmuramate-L-alanine ligase activity"/>
    <property type="evidence" value="ECO:0007669"/>
    <property type="project" value="UniProtKB-UniRule"/>
</dbReference>
<dbReference type="GO" id="GO:0051301">
    <property type="term" value="P:cell division"/>
    <property type="evidence" value="ECO:0007669"/>
    <property type="project" value="UniProtKB-KW"/>
</dbReference>
<dbReference type="GO" id="GO:0071555">
    <property type="term" value="P:cell wall organization"/>
    <property type="evidence" value="ECO:0007669"/>
    <property type="project" value="UniProtKB-KW"/>
</dbReference>
<dbReference type="GO" id="GO:0009252">
    <property type="term" value="P:peptidoglycan biosynthetic process"/>
    <property type="evidence" value="ECO:0007669"/>
    <property type="project" value="UniProtKB-UniRule"/>
</dbReference>
<dbReference type="GO" id="GO:0008360">
    <property type="term" value="P:regulation of cell shape"/>
    <property type="evidence" value="ECO:0007669"/>
    <property type="project" value="UniProtKB-KW"/>
</dbReference>
<dbReference type="Gene3D" id="3.90.190.20">
    <property type="entry name" value="Mur ligase, C-terminal domain"/>
    <property type="match status" value="1"/>
</dbReference>
<dbReference type="Gene3D" id="3.40.1190.10">
    <property type="entry name" value="Mur-like, catalytic domain"/>
    <property type="match status" value="1"/>
</dbReference>
<dbReference type="Gene3D" id="3.40.50.720">
    <property type="entry name" value="NAD(P)-binding Rossmann-like Domain"/>
    <property type="match status" value="1"/>
</dbReference>
<dbReference type="HAMAP" id="MF_00046">
    <property type="entry name" value="MurC"/>
    <property type="match status" value="1"/>
</dbReference>
<dbReference type="InterPro" id="IPR036565">
    <property type="entry name" value="Mur-like_cat_sf"/>
</dbReference>
<dbReference type="InterPro" id="IPR004101">
    <property type="entry name" value="Mur_ligase_C"/>
</dbReference>
<dbReference type="InterPro" id="IPR036615">
    <property type="entry name" value="Mur_ligase_C_dom_sf"/>
</dbReference>
<dbReference type="InterPro" id="IPR013221">
    <property type="entry name" value="Mur_ligase_cen"/>
</dbReference>
<dbReference type="InterPro" id="IPR000713">
    <property type="entry name" value="Mur_ligase_N"/>
</dbReference>
<dbReference type="InterPro" id="IPR050061">
    <property type="entry name" value="MurCDEF_pg_biosynth"/>
</dbReference>
<dbReference type="InterPro" id="IPR005758">
    <property type="entry name" value="UDP-N-AcMur_Ala_ligase_MurC"/>
</dbReference>
<dbReference type="NCBIfam" id="TIGR01082">
    <property type="entry name" value="murC"/>
    <property type="match status" value="1"/>
</dbReference>
<dbReference type="PANTHER" id="PTHR43445:SF3">
    <property type="entry name" value="UDP-N-ACETYLMURAMATE--L-ALANINE LIGASE"/>
    <property type="match status" value="1"/>
</dbReference>
<dbReference type="PANTHER" id="PTHR43445">
    <property type="entry name" value="UDP-N-ACETYLMURAMATE--L-ALANINE LIGASE-RELATED"/>
    <property type="match status" value="1"/>
</dbReference>
<dbReference type="Pfam" id="PF01225">
    <property type="entry name" value="Mur_ligase"/>
    <property type="match status" value="1"/>
</dbReference>
<dbReference type="Pfam" id="PF02875">
    <property type="entry name" value="Mur_ligase_C"/>
    <property type="match status" value="1"/>
</dbReference>
<dbReference type="Pfam" id="PF08245">
    <property type="entry name" value="Mur_ligase_M"/>
    <property type="match status" value="1"/>
</dbReference>
<dbReference type="SUPFAM" id="SSF51984">
    <property type="entry name" value="MurCD N-terminal domain"/>
    <property type="match status" value="1"/>
</dbReference>
<dbReference type="SUPFAM" id="SSF53623">
    <property type="entry name" value="MurD-like peptide ligases, catalytic domain"/>
    <property type="match status" value="1"/>
</dbReference>
<dbReference type="SUPFAM" id="SSF53244">
    <property type="entry name" value="MurD-like peptide ligases, peptide-binding domain"/>
    <property type="match status" value="1"/>
</dbReference>